<comment type="cofactor">
    <cofactor evidence="1">
        <name>Mg(2+)</name>
        <dbReference type="ChEBI" id="CHEBI:18420"/>
    </cofactor>
    <cofactor evidence="1">
        <name>Mn(2+)</name>
        <dbReference type="ChEBI" id="CHEBI:29035"/>
    </cofactor>
    <text evidence="1">Binds 2 magnesium or manganese ions per subunit.</text>
</comment>
<comment type="similarity">
    <text evidence="1">Belongs to the RimK family.</text>
</comment>
<comment type="sequence caution" evidence="2">
    <conflict type="erroneous initiation">
        <sequence resource="EMBL-CDS" id="ABI57608"/>
    </conflict>
</comment>
<sequence length="301" mass="33064">MNILILSRNSRLYSTRRLVEAGRERGHQVRVVDPLRCYMNISPHKPEIHYKGETLENFDGVIPRIGASITFYGTAVLRQFEIMGTFPLNESVAISRSRDKLRSTQLLARKGIGLPMTTFGYSPDDTEDLINLVGGPPMVIKLLEGTQGKGVVLAETQQAAESLIDAFRGLNVHFLAQEYIKEAGGSDIRCFVVGERVVASMRRQAKEGEFRSNIHRGGQASTVRITPEERSMAVRAARIMGLNVAGVDLIRSAHGSLVLEVNSSPGLEGIEKATGKDIAGTIYAFLEKNARQGKTRTRGRG</sequence>
<gene>
    <name evidence="1" type="primary">rimK</name>
    <name type="ordered locus">Mlg_2266</name>
</gene>
<evidence type="ECO:0000255" key="1">
    <source>
        <dbReference type="HAMAP-Rule" id="MF_01552"/>
    </source>
</evidence>
<evidence type="ECO:0000305" key="2"/>
<keyword id="KW-0067">ATP-binding</keyword>
<keyword id="KW-0436">Ligase</keyword>
<keyword id="KW-0460">Magnesium</keyword>
<keyword id="KW-0464">Manganese</keyword>
<keyword id="KW-0479">Metal-binding</keyword>
<keyword id="KW-0547">Nucleotide-binding</keyword>
<keyword id="KW-0648">Protein biosynthesis</keyword>
<keyword id="KW-1185">Reference proteome</keyword>
<name>RIMK_ALKEH</name>
<dbReference type="EC" id="6.3.2.-" evidence="1"/>
<dbReference type="EMBL" id="CP000453">
    <property type="protein sequence ID" value="ABI57608.1"/>
    <property type="status" value="ALT_INIT"/>
    <property type="molecule type" value="Genomic_DNA"/>
</dbReference>
<dbReference type="RefSeq" id="WP_041718046.1">
    <property type="nucleotide sequence ID" value="NC_008340.1"/>
</dbReference>
<dbReference type="SMR" id="Q0A6C9"/>
<dbReference type="KEGG" id="aeh:Mlg_2266"/>
<dbReference type="eggNOG" id="COG0189">
    <property type="taxonomic scope" value="Bacteria"/>
</dbReference>
<dbReference type="HOGENOM" id="CLU_054353_0_1_6"/>
<dbReference type="OrthoDB" id="3865600at2"/>
<dbReference type="Proteomes" id="UP000001962">
    <property type="component" value="Chromosome"/>
</dbReference>
<dbReference type="GO" id="GO:0005737">
    <property type="term" value="C:cytoplasm"/>
    <property type="evidence" value="ECO:0007669"/>
    <property type="project" value="TreeGrafter"/>
</dbReference>
<dbReference type="GO" id="GO:0005524">
    <property type="term" value="F:ATP binding"/>
    <property type="evidence" value="ECO:0007669"/>
    <property type="project" value="UniProtKB-UniRule"/>
</dbReference>
<dbReference type="GO" id="GO:0046872">
    <property type="term" value="F:metal ion binding"/>
    <property type="evidence" value="ECO:0007669"/>
    <property type="project" value="UniProtKB-KW"/>
</dbReference>
<dbReference type="GO" id="GO:0018169">
    <property type="term" value="F:ribosomal S6-glutamic acid ligase activity"/>
    <property type="evidence" value="ECO:0007669"/>
    <property type="project" value="TreeGrafter"/>
</dbReference>
<dbReference type="GO" id="GO:0036211">
    <property type="term" value="P:protein modification process"/>
    <property type="evidence" value="ECO:0007669"/>
    <property type="project" value="InterPro"/>
</dbReference>
<dbReference type="GO" id="GO:0009432">
    <property type="term" value="P:SOS response"/>
    <property type="evidence" value="ECO:0007669"/>
    <property type="project" value="TreeGrafter"/>
</dbReference>
<dbReference type="GO" id="GO:0006412">
    <property type="term" value="P:translation"/>
    <property type="evidence" value="ECO:0007669"/>
    <property type="project" value="UniProtKB-KW"/>
</dbReference>
<dbReference type="FunFam" id="3.30.470.20:FF:000058">
    <property type="entry name" value="Alpha-aminoadipate--LysW ligase LysX protein"/>
    <property type="match status" value="1"/>
</dbReference>
<dbReference type="FunFam" id="3.40.50.20:FF:000004">
    <property type="entry name" value="Probable alpha-L-glutamate ligase"/>
    <property type="match status" value="1"/>
</dbReference>
<dbReference type="FunFam" id="3.30.1490.20:FF:000005">
    <property type="entry name" value="Probable alpha-L-glutamate ligase 1"/>
    <property type="match status" value="1"/>
</dbReference>
<dbReference type="Gene3D" id="3.40.50.20">
    <property type="match status" value="1"/>
</dbReference>
<dbReference type="Gene3D" id="3.30.1490.20">
    <property type="entry name" value="ATP-grasp fold, A domain"/>
    <property type="match status" value="1"/>
</dbReference>
<dbReference type="Gene3D" id="3.30.470.20">
    <property type="entry name" value="ATP-grasp fold, B domain"/>
    <property type="match status" value="1"/>
</dbReference>
<dbReference type="HAMAP" id="MF_01552">
    <property type="entry name" value="RimK"/>
    <property type="match status" value="1"/>
</dbReference>
<dbReference type="InterPro" id="IPR011761">
    <property type="entry name" value="ATP-grasp"/>
</dbReference>
<dbReference type="InterPro" id="IPR013651">
    <property type="entry name" value="ATP-grasp_RimK-type"/>
</dbReference>
<dbReference type="InterPro" id="IPR013815">
    <property type="entry name" value="ATP_grasp_subdomain_1"/>
</dbReference>
<dbReference type="InterPro" id="IPR023533">
    <property type="entry name" value="RimK"/>
</dbReference>
<dbReference type="InterPro" id="IPR041107">
    <property type="entry name" value="Rimk_N"/>
</dbReference>
<dbReference type="InterPro" id="IPR004666">
    <property type="entry name" value="Rp_bS6_RimK/Lys_biosynth_LsyX"/>
</dbReference>
<dbReference type="NCBIfam" id="NF007764">
    <property type="entry name" value="PRK10446.1"/>
    <property type="match status" value="1"/>
</dbReference>
<dbReference type="NCBIfam" id="TIGR00768">
    <property type="entry name" value="rimK_fam"/>
    <property type="match status" value="1"/>
</dbReference>
<dbReference type="PANTHER" id="PTHR21621:SF7">
    <property type="entry name" value="RIBOSOMAL PROTEIN BS6--L-GLUTAMATE LIGASE"/>
    <property type="match status" value="1"/>
</dbReference>
<dbReference type="PANTHER" id="PTHR21621">
    <property type="entry name" value="RIBOSOMAL PROTEIN S6 MODIFICATION PROTEIN"/>
    <property type="match status" value="1"/>
</dbReference>
<dbReference type="Pfam" id="PF08443">
    <property type="entry name" value="RimK"/>
    <property type="match status" value="1"/>
</dbReference>
<dbReference type="Pfam" id="PF18030">
    <property type="entry name" value="Rimk_N"/>
    <property type="match status" value="1"/>
</dbReference>
<dbReference type="SUPFAM" id="SSF56059">
    <property type="entry name" value="Glutathione synthetase ATP-binding domain-like"/>
    <property type="match status" value="1"/>
</dbReference>
<dbReference type="PROSITE" id="PS50975">
    <property type="entry name" value="ATP_GRASP"/>
    <property type="match status" value="1"/>
</dbReference>
<protein>
    <recommendedName>
        <fullName evidence="1">Probable alpha-L-glutamate ligase</fullName>
        <ecNumber evidence="1">6.3.2.-</ecNumber>
    </recommendedName>
</protein>
<proteinExistence type="inferred from homology"/>
<feature type="chain" id="PRO_0000340538" description="Probable alpha-L-glutamate ligase">
    <location>
        <begin position="1"/>
        <end position="301"/>
    </location>
</feature>
<feature type="domain" description="ATP-grasp" evidence="1">
    <location>
        <begin position="104"/>
        <end position="287"/>
    </location>
</feature>
<feature type="binding site" evidence="1">
    <location>
        <position position="141"/>
    </location>
    <ligand>
        <name>ATP</name>
        <dbReference type="ChEBI" id="CHEBI:30616"/>
    </ligand>
</feature>
<feature type="binding site" evidence="1">
    <location>
        <begin position="178"/>
        <end position="179"/>
    </location>
    <ligand>
        <name>ATP</name>
        <dbReference type="ChEBI" id="CHEBI:30616"/>
    </ligand>
</feature>
<feature type="binding site" evidence="1">
    <location>
        <position position="187"/>
    </location>
    <ligand>
        <name>ATP</name>
        <dbReference type="ChEBI" id="CHEBI:30616"/>
    </ligand>
</feature>
<feature type="binding site" evidence="1">
    <location>
        <begin position="211"/>
        <end position="213"/>
    </location>
    <ligand>
        <name>ATP</name>
        <dbReference type="ChEBI" id="CHEBI:30616"/>
    </ligand>
</feature>
<feature type="binding site" evidence="1">
    <location>
        <position position="248"/>
    </location>
    <ligand>
        <name>Mg(2+)</name>
        <dbReference type="ChEBI" id="CHEBI:18420"/>
        <label>1</label>
    </ligand>
</feature>
<feature type="binding site" evidence="1">
    <location>
        <position position="248"/>
    </location>
    <ligand>
        <name>Mn(2+)</name>
        <dbReference type="ChEBI" id="CHEBI:29035"/>
        <label>1</label>
    </ligand>
</feature>
<feature type="binding site" evidence="1">
    <location>
        <position position="260"/>
    </location>
    <ligand>
        <name>Mg(2+)</name>
        <dbReference type="ChEBI" id="CHEBI:18420"/>
        <label>1</label>
    </ligand>
</feature>
<feature type="binding site" evidence="1">
    <location>
        <position position="260"/>
    </location>
    <ligand>
        <name>Mg(2+)</name>
        <dbReference type="ChEBI" id="CHEBI:18420"/>
        <label>2</label>
    </ligand>
</feature>
<feature type="binding site" evidence="1">
    <location>
        <position position="260"/>
    </location>
    <ligand>
        <name>Mn(2+)</name>
        <dbReference type="ChEBI" id="CHEBI:29035"/>
        <label>1</label>
    </ligand>
</feature>
<feature type="binding site" evidence="1">
    <location>
        <position position="260"/>
    </location>
    <ligand>
        <name>Mn(2+)</name>
        <dbReference type="ChEBI" id="CHEBI:29035"/>
        <label>2</label>
    </ligand>
</feature>
<feature type="binding site" evidence="1">
    <location>
        <position position="262"/>
    </location>
    <ligand>
        <name>Mg(2+)</name>
        <dbReference type="ChEBI" id="CHEBI:18420"/>
        <label>2</label>
    </ligand>
</feature>
<feature type="binding site" evidence="1">
    <location>
        <position position="262"/>
    </location>
    <ligand>
        <name>Mn(2+)</name>
        <dbReference type="ChEBI" id="CHEBI:29035"/>
        <label>2</label>
    </ligand>
</feature>
<organism>
    <name type="scientific">Alkalilimnicola ehrlichii (strain ATCC BAA-1101 / DSM 17681 / MLHE-1)</name>
    <dbReference type="NCBI Taxonomy" id="187272"/>
    <lineage>
        <taxon>Bacteria</taxon>
        <taxon>Pseudomonadati</taxon>
        <taxon>Pseudomonadota</taxon>
        <taxon>Gammaproteobacteria</taxon>
        <taxon>Chromatiales</taxon>
        <taxon>Ectothiorhodospiraceae</taxon>
        <taxon>Alkalilimnicola</taxon>
    </lineage>
</organism>
<reference key="1">
    <citation type="submission" date="2006-08" db="EMBL/GenBank/DDBJ databases">
        <title>Complete sequence of Alkalilimnicola ehrilichei MLHE-1.</title>
        <authorList>
            <person name="Copeland A."/>
            <person name="Lucas S."/>
            <person name="Lapidus A."/>
            <person name="Barry K."/>
            <person name="Detter J.C."/>
            <person name="Glavina del Rio T."/>
            <person name="Hammon N."/>
            <person name="Israni S."/>
            <person name="Dalin E."/>
            <person name="Tice H."/>
            <person name="Pitluck S."/>
            <person name="Sims D."/>
            <person name="Brettin T."/>
            <person name="Bruce D."/>
            <person name="Han C."/>
            <person name="Tapia R."/>
            <person name="Gilna P."/>
            <person name="Schmutz J."/>
            <person name="Larimer F."/>
            <person name="Land M."/>
            <person name="Hauser L."/>
            <person name="Kyrpides N."/>
            <person name="Mikhailova N."/>
            <person name="Oremland R.S."/>
            <person name="Hoeft S.E."/>
            <person name="Switzer-Blum J."/>
            <person name="Kulp T."/>
            <person name="King G."/>
            <person name="Tabita R."/>
            <person name="Witte B."/>
            <person name="Santini J.M."/>
            <person name="Basu P."/>
            <person name="Hollibaugh J.T."/>
            <person name="Xie G."/>
            <person name="Stolz J.F."/>
            <person name="Richardson P."/>
        </authorList>
    </citation>
    <scope>NUCLEOTIDE SEQUENCE [LARGE SCALE GENOMIC DNA]</scope>
    <source>
        <strain>ATCC BAA-1101 / DSM 17681 / MLHE-1</strain>
    </source>
</reference>
<accession>Q0A6C9</accession>